<organism>
    <name type="scientific">Trichophyton equinum</name>
    <name type="common">Horse ringworm fungus</name>
    <dbReference type="NCBI Taxonomy" id="63418"/>
    <lineage>
        <taxon>Eukaryota</taxon>
        <taxon>Fungi</taxon>
        <taxon>Dikarya</taxon>
        <taxon>Ascomycota</taxon>
        <taxon>Pezizomycotina</taxon>
        <taxon>Eurotiomycetes</taxon>
        <taxon>Eurotiomycetidae</taxon>
        <taxon>Onygenales</taxon>
        <taxon>Arthrodermataceae</taxon>
        <taxon>Trichophyton</taxon>
    </lineage>
</organism>
<comment type="function">
    <text evidence="1">Secreted metalloproteinase probably acting as a virulence factor.</text>
</comment>
<comment type="cofactor">
    <cofactor evidence="1">
        <name>Zn(2+)</name>
        <dbReference type="ChEBI" id="CHEBI:29105"/>
    </cofactor>
    <text evidence="1">Binds 1 zinc ion per subunit.</text>
</comment>
<comment type="subcellular location">
    <subcellularLocation>
        <location evidence="1">Secreted</location>
    </subcellularLocation>
</comment>
<comment type="similarity">
    <text evidence="4">Belongs to the peptidase M36 family.</text>
</comment>
<feature type="signal peptide" evidence="2">
    <location>
        <begin position="1" status="less than"/>
        <end position="8"/>
    </location>
</feature>
<feature type="propeptide" id="PRO_0000380834" evidence="1">
    <location>
        <begin position="9"/>
        <end position="235"/>
    </location>
</feature>
<feature type="chain" id="PRO_0000380835" description="Extracellular metalloproteinase 1">
    <location>
        <begin position="236"/>
        <end position="615" status="greater than"/>
    </location>
</feature>
<feature type="active site" evidence="3">
    <location>
        <position position="420"/>
    </location>
</feature>
<feature type="binding site" evidence="3">
    <location>
        <position position="419"/>
    </location>
    <ligand>
        <name>Zn(2+)</name>
        <dbReference type="ChEBI" id="CHEBI:29105"/>
        <note>catalytic</note>
    </ligand>
</feature>
<feature type="binding site" evidence="3">
    <location>
        <position position="423"/>
    </location>
    <ligand>
        <name>Zn(2+)</name>
        <dbReference type="ChEBI" id="CHEBI:29105"/>
        <note>catalytic</note>
    </ligand>
</feature>
<feature type="glycosylation site" description="N-linked (GlcNAc...) asparagine" evidence="2">
    <location>
        <position position="276"/>
    </location>
</feature>
<feature type="glycosylation site" description="N-linked (GlcNAc...) asparagine" evidence="2">
    <location>
        <position position="464"/>
    </location>
</feature>
<feature type="glycosylation site" description="N-linked (GlcNAc...) asparagine" evidence="2">
    <location>
        <position position="583"/>
    </location>
</feature>
<feature type="glycosylation site" description="N-linked (GlcNAc...) asparagine" evidence="2">
    <location>
        <position position="612"/>
    </location>
</feature>
<feature type="non-terminal residue">
    <location>
        <position position="1"/>
    </location>
</feature>
<feature type="non-terminal residue">
    <location>
        <position position="615"/>
    </location>
</feature>
<gene>
    <name type="primary">MEP1</name>
</gene>
<keyword id="KW-0325">Glycoprotein</keyword>
<keyword id="KW-0378">Hydrolase</keyword>
<keyword id="KW-0479">Metal-binding</keyword>
<keyword id="KW-0482">Metalloprotease</keyword>
<keyword id="KW-0645">Protease</keyword>
<keyword id="KW-0964">Secreted</keyword>
<keyword id="KW-0732">Signal</keyword>
<keyword id="KW-0843">Virulence</keyword>
<keyword id="KW-0862">Zinc</keyword>
<keyword id="KW-0865">Zymogen</keyword>
<dbReference type="EC" id="3.4.24.-"/>
<dbReference type="EMBL" id="EU076574">
    <property type="protein sequence ID" value="ABU50384.1"/>
    <property type="molecule type" value="Genomic_DNA"/>
</dbReference>
<dbReference type="SMR" id="A7UKV9"/>
<dbReference type="MEROPS" id="M36.001"/>
<dbReference type="GlyCosmos" id="A7UKV9">
    <property type="glycosylation" value="4 sites, No reported glycans"/>
</dbReference>
<dbReference type="VEuPathDB" id="FungiDB:TEQG_07141"/>
<dbReference type="GO" id="GO:0005576">
    <property type="term" value="C:extracellular region"/>
    <property type="evidence" value="ECO:0007669"/>
    <property type="project" value="UniProtKB-SubCell"/>
</dbReference>
<dbReference type="GO" id="GO:0004222">
    <property type="term" value="F:metalloendopeptidase activity"/>
    <property type="evidence" value="ECO:0007669"/>
    <property type="project" value="InterPro"/>
</dbReference>
<dbReference type="GO" id="GO:0008270">
    <property type="term" value="F:zinc ion binding"/>
    <property type="evidence" value="ECO:0007669"/>
    <property type="project" value="InterPro"/>
</dbReference>
<dbReference type="GO" id="GO:0006508">
    <property type="term" value="P:proteolysis"/>
    <property type="evidence" value="ECO:0007669"/>
    <property type="project" value="UniProtKB-KW"/>
</dbReference>
<dbReference type="CDD" id="cd09596">
    <property type="entry name" value="M36"/>
    <property type="match status" value="1"/>
</dbReference>
<dbReference type="Gene3D" id="3.10.170.10">
    <property type="match status" value="1"/>
</dbReference>
<dbReference type="Gene3D" id="1.10.390.10">
    <property type="entry name" value="Neutral Protease Domain 2"/>
    <property type="match status" value="1"/>
</dbReference>
<dbReference type="InterPro" id="IPR011096">
    <property type="entry name" value="FTP_domain"/>
</dbReference>
<dbReference type="InterPro" id="IPR050371">
    <property type="entry name" value="Fungal_virulence_M36"/>
</dbReference>
<dbReference type="InterPro" id="IPR001842">
    <property type="entry name" value="Peptidase_M36"/>
</dbReference>
<dbReference type="InterPro" id="IPR027268">
    <property type="entry name" value="Peptidase_M4/M1_CTD_sf"/>
</dbReference>
<dbReference type="PANTHER" id="PTHR33478">
    <property type="entry name" value="EXTRACELLULAR METALLOPROTEINASE MEP"/>
    <property type="match status" value="1"/>
</dbReference>
<dbReference type="PANTHER" id="PTHR33478:SF1">
    <property type="entry name" value="EXTRACELLULAR METALLOPROTEINASE MEP"/>
    <property type="match status" value="1"/>
</dbReference>
<dbReference type="Pfam" id="PF07504">
    <property type="entry name" value="FTP"/>
    <property type="match status" value="1"/>
</dbReference>
<dbReference type="Pfam" id="PF02128">
    <property type="entry name" value="Peptidase_M36"/>
    <property type="match status" value="1"/>
</dbReference>
<dbReference type="PRINTS" id="PR00999">
    <property type="entry name" value="FUNGALYSIN"/>
</dbReference>
<dbReference type="SUPFAM" id="SSF55486">
    <property type="entry name" value="Metalloproteases ('zincins'), catalytic domain"/>
    <property type="match status" value="1"/>
</dbReference>
<dbReference type="PROSITE" id="PS00142">
    <property type="entry name" value="ZINC_PROTEASE"/>
    <property type="match status" value="1"/>
</dbReference>
<protein>
    <recommendedName>
        <fullName>Extracellular metalloproteinase 1</fullName>
        <ecNumber>3.4.24.-</ecNumber>
    </recommendedName>
    <alternativeName>
        <fullName>Fungalysin MEP1</fullName>
    </alternativeName>
</protein>
<reference key="1">
    <citation type="submission" date="2007-08" db="EMBL/GenBank/DDBJ databases">
        <title>Comparing putative pathogenicity factors between Trichophyton tonsurans and Trichophyton equinum.</title>
        <authorList>
            <person name="Brown J.T."/>
            <person name="Preuett B.L."/>
            <person name="Abdel-Rahman S.M."/>
        </authorList>
    </citation>
    <scope>NUCLEOTIDE SEQUENCE [GENOMIC DNA]</scope>
</reference>
<accession>A7UKV9</accession>
<name>MEP1_TRIEQ</name>
<sequence>SLPLHVLAHPQPSTSTSLAGRAGAVDLNEFRVAHRSSYASHDEMKKLPSIASFRQGTYLEVATELVKQTMPNMEFRLVDDHYVGDSGIGHVRFRQTMHGIDIDNSDFNVNVGKDGKILSHGNSFYTGPAPASNPMIKRDFIDPMQALNGVRKALNLPVKADGAHVENMSEHKVMFKGTSGALSDPTAKLCYMAKEDGSLALTWRVETDIGDNWLLSYMDAKESSKVHNVVDYVAHATFQVYKWGLADPTEGKRDILTNPWNLKTSPLTWLADGKTNFTATRGNNAIAQYNPDGGNDYENNYRPSPKNLKFEYPYSPDMNPPKTYIDASVTQLFYTSNVCHDLYYMLGFNEKAGNFQVNNRGQGGKGNDYVILNAQDGSGTNNANFATPPDGQPGRMRAYIWTRANPPRDASFEAGTIIHEYTHGLSNRLCGGPANSRCLNALESGGMGEGWGDFYATAVRLKPNDTRKTNYVKGGWVNNSPKGVRMYPYSTDMNVNPLVYTSNNKLNEVHAIGTVWCTMLYEVLWNLIDKHGKNDGPVPVFENGVPNDGKYLAMKLVMDGMAIQPCNPNFVQARDAILDADMNLTKGANKCEIWKGFAKRGLGVGAKFDPKNRTG</sequence>
<proteinExistence type="inferred from homology"/>
<evidence type="ECO:0000250" key="1"/>
<evidence type="ECO:0000255" key="2"/>
<evidence type="ECO:0000255" key="3">
    <source>
        <dbReference type="PROSITE-ProRule" id="PRU10095"/>
    </source>
</evidence>
<evidence type="ECO:0000305" key="4"/>